<evidence type="ECO:0000250" key="1"/>
<evidence type="ECO:0000256" key="2">
    <source>
        <dbReference type="SAM" id="MobiDB-lite"/>
    </source>
</evidence>
<evidence type="ECO:0000305" key="3"/>
<organism>
    <name type="scientific">Neisseria meningitidis serogroup B (strain ATCC BAA-335 / MC58)</name>
    <dbReference type="NCBI Taxonomy" id="122586"/>
    <lineage>
        <taxon>Bacteria</taxon>
        <taxon>Pseudomonadati</taxon>
        <taxon>Pseudomonadota</taxon>
        <taxon>Betaproteobacteria</taxon>
        <taxon>Neisseriales</taxon>
        <taxon>Neisseriaceae</taxon>
        <taxon>Neisseria</taxon>
    </lineage>
</organism>
<gene>
    <name type="primary">frpC</name>
    <name type="ordered locus">NMB1415</name>
</gene>
<dbReference type="EMBL" id="AE002098">
    <property type="protein sequence ID" value="AAF41776.1"/>
    <property type="molecule type" value="Genomic_DNA"/>
</dbReference>
<dbReference type="PIR" id="E81086">
    <property type="entry name" value="E81086"/>
</dbReference>
<dbReference type="RefSeq" id="NP_274427.1">
    <property type="nucleotide sequence ID" value="NC_003112.2"/>
</dbReference>
<dbReference type="RefSeq" id="WP_010980934.1">
    <property type="nucleotide sequence ID" value="NC_003112.2"/>
</dbReference>
<dbReference type="SASBDB" id="Q9JYV5"/>
<dbReference type="SMR" id="Q9JYV5"/>
<dbReference type="STRING" id="122586.NMB1415"/>
<dbReference type="PaxDb" id="122586-NMB1415"/>
<dbReference type="KEGG" id="nme:NMB1415"/>
<dbReference type="PATRIC" id="fig|122586.8.peg.1767"/>
<dbReference type="HOGENOM" id="CLU_001954_0_1_4"/>
<dbReference type="InParanoid" id="Q9JYV5"/>
<dbReference type="OrthoDB" id="1676884at2"/>
<dbReference type="Proteomes" id="UP000000425">
    <property type="component" value="Chromosome"/>
</dbReference>
<dbReference type="GO" id="GO:0009279">
    <property type="term" value="C:cell outer membrane"/>
    <property type="evidence" value="ECO:0007669"/>
    <property type="project" value="UniProtKB-SubCell"/>
</dbReference>
<dbReference type="GO" id="GO:0005576">
    <property type="term" value="C:extracellular region"/>
    <property type="evidence" value="ECO:0007669"/>
    <property type="project" value="UniProtKB-SubCell"/>
</dbReference>
<dbReference type="GO" id="GO:0005509">
    <property type="term" value="F:calcium ion binding"/>
    <property type="evidence" value="ECO:0007669"/>
    <property type="project" value="InterPro"/>
</dbReference>
<dbReference type="GO" id="GO:0090729">
    <property type="term" value="F:toxin activity"/>
    <property type="evidence" value="ECO:0007669"/>
    <property type="project" value="UniProtKB-KW"/>
</dbReference>
<dbReference type="Gene3D" id="1.20.120.20">
    <property type="entry name" value="Apolipoprotein"/>
    <property type="match status" value="1"/>
</dbReference>
<dbReference type="Gene3D" id="2.150.10.10">
    <property type="entry name" value="Serralysin-like metalloprotease, C-terminal"/>
    <property type="match status" value="7"/>
</dbReference>
<dbReference type="InterPro" id="IPR010566">
    <property type="entry name" value="Haemolys_ca-bd"/>
</dbReference>
<dbReference type="InterPro" id="IPR018511">
    <property type="entry name" value="Hemolysin-typ_Ca-bd_CS"/>
</dbReference>
<dbReference type="InterPro" id="IPR001343">
    <property type="entry name" value="Hemolysn_Ca-bd"/>
</dbReference>
<dbReference type="InterPro" id="IPR050557">
    <property type="entry name" value="RTX_toxin/Mannuronan_C5-epim"/>
</dbReference>
<dbReference type="InterPro" id="IPR003995">
    <property type="entry name" value="RTX_toxin_determinant-A"/>
</dbReference>
<dbReference type="InterPro" id="IPR011049">
    <property type="entry name" value="Serralysin-like_metalloprot_C"/>
</dbReference>
<dbReference type="PANTHER" id="PTHR38340">
    <property type="entry name" value="S-LAYER PROTEIN"/>
    <property type="match status" value="1"/>
</dbReference>
<dbReference type="PANTHER" id="PTHR38340:SF1">
    <property type="entry name" value="S-LAYER PROTEIN"/>
    <property type="match status" value="1"/>
</dbReference>
<dbReference type="Pfam" id="PF06594">
    <property type="entry name" value="HCBP_related"/>
    <property type="match status" value="4"/>
</dbReference>
<dbReference type="Pfam" id="PF00353">
    <property type="entry name" value="HemolysinCabind"/>
    <property type="match status" value="9"/>
</dbReference>
<dbReference type="PRINTS" id="PR00313">
    <property type="entry name" value="CABNDNGRPT"/>
</dbReference>
<dbReference type="PRINTS" id="PR01488">
    <property type="entry name" value="RTXTOXINA"/>
</dbReference>
<dbReference type="SUPFAM" id="SSF51120">
    <property type="entry name" value="beta-Roll"/>
    <property type="match status" value="5"/>
</dbReference>
<dbReference type="PROSITE" id="PS00330">
    <property type="entry name" value="HEMOLYSIN_CALCIUM"/>
    <property type="match status" value="17"/>
</dbReference>
<proteinExistence type="inferred from homology"/>
<sequence>MNEGEVVLTPEQIQTLRGYASRGDTYGGWRYLANLGDRYADDAAAIVGKDANLNGLNLWMKKGVENLWDDTVGKKTRLEKFDRVALQHFRQYARLINQNNGRLPNTSEIERSYYKAVTDNGVSSSAAIDLVINRSLPDMADGYWALGLGIEAERIHNEQAVNNPNGSERDNRKQLISALDKGFDGSFKEKHFTFLQSVMMDVTKLGVEYTIDGWQKIGGWGNGIINDLYKSVVKREWTGIFEIVNNNIKQGNEAFKNEINSLVHDMKAAGKEFGDDLNTQWNNLTQAAEIIYNDIVDNTSQGIEKGVKAIKELSEKMKNAASDLADGSAEKAKQVVEDLAQAAKEAYENAKSTAEKAAQAAREFFKGLPSFKDLAEKFRDLFPNPEGWIDDGHQCLAPWVKETKKRNGKYHVYDPLALDLDGDGIETVATKGFAGSLFDHTNNGIRTATGWVSADDGLLVRDLNGNGIIDNGAELFGDNTKLADGSFAKHGYAALAELDSNGDNIINAADAAFQTLRVWQDLNQDGISQANELRTLEELGIQSLDLAYKDVNKNLGNGNTLAQQGSYTKTDGTTAKMGDLLLAADNLHSRFKDKVELTAEQAKAANLAGIGRLRDLREAAALSGDLANMLKAYSAAETKEAQLALLDNLIHKWAETDSNWGKKSPMRLSTDWTQTANEGIALTPSQVAQLKKNALVSLSDKAKAAIDAARDRIAVLDAYTGQDSNTLYYMSEEDALNIVKVTNDTYDHLAKNIYQNLLFQTRLQPYLNQISFKMENDTFTLDFSGLVQAFNHVKETNPQKAFVDLAEMLAYGELRSWYEGRRLMTDYVEEAKKAGKFEDYQKVLGQETVALLAKTSGTQADDILQNVGFGHNKNVSLYGNDGNDTLIGGAGNDYLEGGSGSDTYVFGEGFGQDTVYNYDYATGRKDIIRFTDGITADMLTFTREGNHLLIKAKDGSGQVTVQSYFQNDGSGAYRIDEIHFDNGKVLDVATVKELVQQSTDGSDRLYAYQSGNTLNGGLGDDYLYGADGDDLLNGDAGNDSIYSGNGNDTLDGGEGNDALYGYNGNDALNGGEGNDHLNGEDGNDTLIGGAGNDYLEGGSGSDTYVFGKGFGQDTVYNYDYATGRKDIIRFTDGITADMLTFTREGNHLLIKAKDGSGQVTVQYYFQNDGSGAYRIDEIHFDNGKVLDVATVKELVQQSTDGSDRLYAYQSGNTLNGGLGDDYLYGADGDDLLNGDAGNDSIYSGNGNDTLDGGEGNDALYGYNGNDALNGGEGNDHLNGEDGNDTLIGGAGNDYLEGGSGSDTYVFGKGFGQDAVYNYDYATGRKDIIRFTDGITADMLTFTREGNHLLIKAKDGSGQVTVQSYFQNDGSGAYRIDEIHFDNGKVLDVATVKELVQQSTDGSDRLYAYQSGNTLNGGLGDDYLYGADGDDLLNGDAGNDSIYSGNGNDTLNGGEGNDALYGYNGNDALNGGEGNDHLNGEDGNDTLIGGAGNDYLEGGSGSDTYVFGKGFGQDAVYNYDYATGRKDIIRFTDGITADMLTFTREGNHLLIKAKDGSGQVTVQSYFQNDGSGAYRIDEIHFDNGKVLDVATVKELVQQSTDGSDRLYAYQSGSTLNGGLGDDYLYGADGDDLLNGDAGNDSIYSGNGNDTLDGGEGNDALYGYNGNDALNGGEGNDHLNGEDGNDTLIGGAGNDYLEGGSGSDTYVFGEGFGQDTVYNYHVDKNSDTMHFKGFKAADVHFIRSGSDLVLSASEQDNVRISGFFYGENHRVDTFVFDDAAISNPDFAKYINAGNNLVQSMSVFGSNTAATGGNVDANIQSVQQPLLVTPSA</sequence>
<protein>
    <recommendedName>
        <fullName>Iron-regulated protein FrpC</fullName>
    </recommendedName>
</protein>
<keyword id="KW-0106">Calcium</keyword>
<keyword id="KW-0998">Cell outer membrane</keyword>
<keyword id="KW-0472">Membrane</keyword>
<keyword id="KW-1185">Reference proteome</keyword>
<keyword id="KW-0677">Repeat</keyword>
<keyword id="KW-0964">Secreted</keyword>
<keyword id="KW-0800">Toxin</keyword>
<keyword id="KW-0843">Virulence</keyword>
<accession>Q9JYV5</accession>
<feature type="chain" id="PRO_0000196244" description="Iron-regulated protein FrpC">
    <location>
        <begin position="1"/>
        <end position="1829"/>
    </location>
</feature>
<feature type="repeat" description="Hemolysin-type calcium-binding 1">
    <location>
        <begin position="869"/>
        <end position="886"/>
    </location>
</feature>
<feature type="repeat" description="Hemolysin-type calcium-binding 2">
    <location>
        <begin position="887"/>
        <end position="904"/>
    </location>
</feature>
<feature type="repeat" description="Hemolysin-type calcium-binding 3">
    <location>
        <begin position="1015"/>
        <end position="1032"/>
    </location>
</feature>
<feature type="repeat" description="Hemolysin-type calcium-binding 4">
    <location>
        <begin position="1033"/>
        <end position="1050"/>
    </location>
</feature>
<feature type="repeat" description="Hemolysin-type calcium-binding 5">
    <location>
        <begin position="1051"/>
        <end position="1068"/>
    </location>
</feature>
<feature type="repeat" description="Hemolysin-type calcium-binding 6">
    <location>
        <begin position="1069"/>
        <end position="1086"/>
    </location>
</feature>
<feature type="repeat" description="Hemolysin-type calcium-binding 7">
    <location>
        <begin position="1087"/>
        <end position="1104"/>
    </location>
</feature>
<feature type="repeat" description="Hemolysin-type calcium-binding 8">
    <location>
        <begin position="1215"/>
        <end position="1232"/>
    </location>
</feature>
<feature type="repeat" description="Hemolysin-type calcium-binding 9">
    <location>
        <begin position="1233"/>
        <end position="1250"/>
    </location>
</feature>
<feature type="repeat" description="Hemolysin-type calcium-binding 10">
    <location>
        <begin position="1251"/>
        <end position="1268"/>
    </location>
</feature>
<feature type="repeat" description="Hemolysin-type calcium-binding 11">
    <location>
        <begin position="1269"/>
        <end position="1286"/>
    </location>
</feature>
<feature type="repeat" description="Hemolysin-type calcium-binding 12">
    <location>
        <begin position="1287"/>
        <end position="1304"/>
    </location>
</feature>
<feature type="repeat" description="Hemolysin-type calcium-binding 13">
    <location>
        <begin position="1415"/>
        <end position="1432"/>
    </location>
</feature>
<feature type="repeat" description="Hemolysin-type calcium-binding 14">
    <location>
        <begin position="1433"/>
        <end position="1450"/>
    </location>
</feature>
<feature type="repeat" description="Hemolysin-type calcium-binding 15">
    <location>
        <begin position="1451"/>
        <end position="1468"/>
    </location>
</feature>
<feature type="repeat" description="Hemolysin-type calcium-binding 16">
    <location>
        <begin position="1469"/>
        <end position="1486"/>
    </location>
</feature>
<feature type="repeat" description="Hemolysin-type calcium-binding 17">
    <location>
        <begin position="1487"/>
        <end position="1504"/>
    </location>
</feature>
<feature type="repeat" description="Hemolysin-type calcium-binding 18">
    <location>
        <begin position="1615"/>
        <end position="1632"/>
    </location>
</feature>
<feature type="repeat" description="Hemolysin-type calcium-binding 19">
    <location>
        <begin position="1633"/>
        <end position="1650"/>
    </location>
</feature>
<feature type="repeat" description="Hemolysin-type calcium-binding 20">
    <location>
        <begin position="1651"/>
        <end position="1668"/>
    </location>
</feature>
<feature type="repeat" description="Hemolysin-type calcium-binding 21">
    <location>
        <begin position="1669"/>
        <end position="1686"/>
    </location>
</feature>
<feature type="repeat" description="Hemolysin-type calcium-binding 22">
    <location>
        <begin position="1687"/>
        <end position="1704"/>
    </location>
</feature>
<feature type="region of interest" description="Disordered" evidence="2">
    <location>
        <begin position="1671"/>
        <end position="1690"/>
    </location>
</feature>
<name>FRPC_NEIMB</name>
<comment type="function">
    <text>May participate in the pathogenesis of meningococcal disease.</text>
</comment>
<comment type="subcellular location">
    <subcellularLocation>
        <location evidence="1">Cell outer membrane</location>
        <topology evidence="1">Peripheral membrane protein</topology>
    </subcellularLocation>
    <subcellularLocation>
        <location evidence="1">Secreted</location>
    </subcellularLocation>
</comment>
<comment type="domain">
    <text>The Gly-rich region is probably involved in binding calcium, which is required for target cell-binding or cytolytic activity.</text>
</comment>
<comment type="similarity">
    <text evidence="3">Belongs to the RTX prokaryotic toxin (TC 1.C.11) family.</text>
</comment>
<reference key="1">
    <citation type="journal article" date="2000" name="Science">
        <title>Complete genome sequence of Neisseria meningitidis serogroup B strain MC58.</title>
        <authorList>
            <person name="Tettelin H."/>
            <person name="Saunders N.J."/>
            <person name="Heidelberg J.F."/>
            <person name="Jeffries A.C."/>
            <person name="Nelson K.E."/>
            <person name="Eisen J.A."/>
            <person name="Ketchum K.A."/>
            <person name="Hood D.W."/>
            <person name="Peden J.F."/>
            <person name="Dodson R.J."/>
            <person name="Nelson W.C."/>
            <person name="Gwinn M.L."/>
            <person name="DeBoy R.T."/>
            <person name="Peterson J.D."/>
            <person name="Hickey E.K."/>
            <person name="Haft D.H."/>
            <person name="Salzberg S.L."/>
            <person name="White O."/>
            <person name="Fleischmann R.D."/>
            <person name="Dougherty B.A."/>
            <person name="Mason T.M."/>
            <person name="Ciecko A."/>
            <person name="Parksey D.S."/>
            <person name="Blair E."/>
            <person name="Cittone H."/>
            <person name="Clark E.B."/>
            <person name="Cotton M.D."/>
            <person name="Utterback T.R."/>
            <person name="Khouri H.M."/>
            <person name="Qin H."/>
            <person name="Vamathevan J.J."/>
            <person name="Gill J."/>
            <person name="Scarlato V."/>
            <person name="Masignani V."/>
            <person name="Pizza M."/>
            <person name="Grandi G."/>
            <person name="Sun L."/>
            <person name="Smith H.O."/>
            <person name="Fraser C.M."/>
            <person name="Moxon E.R."/>
            <person name="Rappuoli R."/>
            <person name="Venter J.C."/>
        </authorList>
    </citation>
    <scope>NUCLEOTIDE SEQUENCE [LARGE SCALE GENOMIC DNA]</scope>
    <source>
        <strain>ATCC BAA-335 / MC58</strain>
    </source>
</reference>